<reference key="1">
    <citation type="journal article" date="2002" name="Science">
        <title>50 million years of genomic stasis in endosymbiotic bacteria.</title>
        <authorList>
            <person name="Tamas I."/>
            <person name="Klasson L."/>
            <person name="Canbaeck B."/>
            <person name="Naeslund A.K."/>
            <person name="Eriksson A.-S."/>
            <person name="Wernegreen J.J."/>
            <person name="Sandstroem J.P."/>
            <person name="Moran N.A."/>
            <person name="Andersson S.G.E."/>
        </authorList>
    </citation>
    <scope>NUCLEOTIDE SEQUENCE [LARGE SCALE GENOMIC DNA]</scope>
    <source>
        <strain>Sg</strain>
    </source>
</reference>
<accession>Q8K9I2</accession>
<organism>
    <name type="scientific">Buchnera aphidicola subsp. Schizaphis graminum (strain Sg)</name>
    <dbReference type="NCBI Taxonomy" id="198804"/>
    <lineage>
        <taxon>Bacteria</taxon>
        <taxon>Pseudomonadati</taxon>
        <taxon>Pseudomonadota</taxon>
        <taxon>Gammaproteobacteria</taxon>
        <taxon>Enterobacterales</taxon>
        <taxon>Erwiniaceae</taxon>
        <taxon>Buchnera</taxon>
    </lineage>
</organism>
<name>TRHO_BUCAP</name>
<sequence>MMSNLCNRISKKELKKKILMNEESRIVVSFYKYFLIKNTKEYRDRIYQNFYKYNVLGRVYVSDEGINAQISIPVKFYFFVKNFLYNSDLELNNLFINKSLSNHKKAFWVLSVKIKKKIVNDGITNPLFNFKKVGIYIKSRQVNMMLSDRNVIFIDMRNSYEYEIGHFPNAIEIKSQTFREQLKKVIQIMHYAKNKKIVMYCTGGIRCEKASAWMHFNGFKYVYHLKNGILGYVHDANKNGLPILFQGSNFVFDNRMSEKISDKIISFCKQCDKPSDRYVNCNFNLCHLLFIQCKDCTIKFKKCCSKYCMQHL</sequence>
<comment type="function">
    <text evidence="1">Catalyzes oxygen-dependent 5-hydroxyuridine (ho5U) modification at position 34 in tRNAs.</text>
</comment>
<comment type="catalytic activity">
    <reaction evidence="1">
        <text>uridine(34) in tRNA + AH2 + O2 = 5-hydroxyuridine(34) in tRNA + A + H2O</text>
        <dbReference type="Rhea" id="RHEA:64224"/>
        <dbReference type="Rhea" id="RHEA-COMP:11727"/>
        <dbReference type="Rhea" id="RHEA-COMP:13381"/>
        <dbReference type="ChEBI" id="CHEBI:13193"/>
        <dbReference type="ChEBI" id="CHEBI:15377"/>
        <dbReference type="ChEBI" id="CHEBI:15379"/>
        <dbReference type="ChEBI" id="CHEBI:17499"/>
        <dbReference type="ChEBI" id="CHEBI:65315"/>
        <dbReference type="ChEBI" id="CHEBI:136877"/>
    </reaction>
</comment>
<comment type="similarity">
    <text evidence="1">Belongs to the TrhO family.</text>
</comment>
<evidence type="ECO:0000255" key="1">
    <source>
        <dbReference type="HAMAP-Rule" id="MF_00469"/>
    </source>
</evidence>
<feature type="chain" id="PRO_0000161456" description="tRNA uridine(34) hydroxylase">
    <location>
        <begin position="1"/>
        <end position="312"/>
    </location>
</feature>
<feature type="domain" description="Rhodanese" evidence="1">
    <location>
        <begin position="147"/>
        <end position="237"/>
    </location>
</feature>
<feature type="active site" description="Cysteine persulfide intermediate" evidence="1">
    <location>
        <position position="201"/>
    </location>
</feature>
<dbReference type="EC" id="1.14.-.-" evidence="1"/>
<dbReference type="EMBL" id="AE013218">
    <property type="protein sequence ID" value="AAM67906.1"/>
    <property type="molecule type" value="Genomic_DNA"/>
</dbReference>
<dbReference type="SMR" id="Q8K9I2"/>
<dbReference type="STRING" id="198804.BUsg_353"/>
<dbReference type="KEGG" id="bas:BUsg_353"/>
<dbReference type="eggNOG" id="COG1054">
    <property type="taxonomic scope" value="Bacteria"/>
</dbReference>
<dbReference type="HOGENOM" id="CLU_038878_1_1_6"/>
<dbReference type="Proteomes" id="UP000000416">
    <property type="component" value="Chromosome"/>
</dbReference>
<dbReference type="GO" id="GO:0016705">
    <property type="term" value="F:oxidoreductase activity, acting on paired donors, with incorporation or reduction of molecular oxygen"/>
    <property type="evidence" value="ECO:0007669"/>
    <property type="project" value="UniProtKB-UniRule"/>
</dbReference>
<dbReference type="GO" id="GO:0006400">
    <property type="term" value="P:tRNA modification"/>
    <property type="evidence" value="ECO:0007669"/>
    <property type="project" value="UniProtKB-UniRule"/>
</dbReference>
<dbReference type="CDD" id="cd01518">
    <property type="entry name" value="RHOD_YceA"/>
    <property type="match status" value="1"/>
</dbReference>
<dbReference type="Gene3D" id="3.30.70.100">
    <property type="match status" value="1"/>
</dbReference>
<dbReference type="Gene3D" id="3.40.250.10">
    <property type="entry name" value="Rhodanese-like domain"/>
    <property type="match status" value="1"/>
</dbReference>
<dbReference type="HAMAP" id="MF_00469">
    <property type="entry name" value="TrhO"/>
    <property type="match status" value="1"/>
</dbReference>
<dbReference type="InterPro" id="IPR001763">
    <property type="entry name" value="Rhodanese-like_dom"/>
</dbReference>
<dbReference type="InterPro" id="IPR036873">
    <property type="entry name" value="Rhodanese-like_dom_sf"/>
</dbReference>
<dbReference type="InterPro" id="IPR022111">
    <property type="entry name" value="Rhodanese_C"/>
</dbReference>
<dbReference type="InterPro" id="IPR020936">
    <property type="entry name" value="TrhO"/>
</dbReference>
<dbReference type="InterPro" id="IPR040503">
    <property type="entry name" value="TRHO_N"/>
</dbReference>
<dbReference type="NCBIfam" id="NF001133">
    <property type="entry name" value="PRK00142.1-1"/>
    <property type="match status" value="1"/>
</dbReference>
<dbReference type="PANTHER" id="PTHR43846:SF1">
    <property type="entry name" value="TRNA URIDINE(34) HYDROXYLASE"/>
    <property type="match status" value="1"/>
</dbReference>
<dbReference type="PANTHER" id="PTHR43846">
    <property type="entry name" value="UPF0176 PROTEIN YCEA"/>
    <property type="match status" value="1"/>
</dbReference>
<dbReference type="Pfam" id="PF00581">
    <property type="entry name" value="Rhodanese"/>
    <property type="match status" value="1"/>
</dbReference>
<dbReference type="Pfam" id="PF12368">
    <property type="entry name" value="Rhodanese_C"/>
    <property type="match status" value="1"/>
</dbReference>
<dbReference type="Pfam" id="PF17773">
    <property type="entry name" value="UPF0176_N"/>
    <property type="match status" value="1"/>
</dbReference>
<dbReference type="SMART" id="SM00450">
    <property type="entry name" value="RHOD"/>
    <property type="match status" value="1"/>
</dbReference>
<dbReference type="SUPFAM" id="SSF52821">
    <property type="entry name" value="Rhodanese/Cell cycle control phosphatase"/>
    <property type="match status" value="1"/>
</dbReference>
<dbReference type="PROSITE" id="PS50206">
    <property type="entry name" value="RHODANESE_3"/>
    <property type="match status" value="1"/>
</dbReference>
<proteinExistence type="inferred from homology"/>
<gene>
    <name evidence="1" type="primary">trhO</name>
    <name type="ordered locus">BUsg_353</name>
</gene>
<keyword id="KW-0560">Oxidoreductase</keyword>
<keyword id="KW-0819">tRNA processing</keyword>
<protein>
    <recommendedName>
        <fullName evidence="1">tRNA uridine(34) hydroxylase</fullName>
        <ecNumber evidence="1">1.14.-.-</ecNumber>
    </recommendedName>
    <alternativeName>
        <fullName evidence="1">tRNA hydroxylation protein O</fullName>
    </alternativeName>
</protein>